<dbReference type="EMBL" id="AE004091">
    <property type="protein sequence ID" value="AAG07809.1"/>
    <property type="molecule type" value="Genomic_DNA"/>
</dbReference>
<dbReference type="PIR" id="F83095">
    <property type="entry name" value="F83095"/>
</dbReference>
<dbReference type="RefSeq" id="NP_253111.1">
    <property type="nucleotide sequence ID" value="NC_002516.2"/>
</dbReference>
<dbReference type="RefSeq" id="WP_003103101.1">
    <property type="nucleotide sequence ID" value="NZ_QZGE01000004.1"/>
</dbReference>
<dbReference type="SMR" id="Q9HVZ4"/>
<dbReference type="FunCoup" id="Q9HVZ4">
    <property type="interactions" value="247"/>
</dbReference>
<dbReference type="STRING" id="208964.PA4421"/>
<dbReference type="PaxDb" id="208964-PA4421"/>
<dbReference type="GeneID" id="77222921"/>
<dbReference type="GeneID" id="881255"/>
<dbReference type="KEGG" id="pae:PA4421"/>
<dbReference type="PATRIC" id="fig|208964.12.peg.4630"/>
<dbReference type="PseudoCAP" id="PA4421"/>
<dbReference type="HOGENOM" id="CLU_107907_2_0_6"/>
<dbReference type="InParanoid" id="Q9HVZ4"/>
<dbReference type="OrthoDB" id="9807753at2"/>
<dbReference type="PhylomeDB" id="Q9HVZ4"/>
<dbReference type="BioCyc" id="PAER208964:G1FZ6-4508-MONOMER"/>
<dbReference type="Proteomes" id="UP000002438">
    <property type="component" value="Chromosome"/>
</dbReference>
<dbReference type="GO" id="GO:0005737">
    <property type="term" value="C:cytoplasm"/>
    <property type="evidence" value="ECO:0007669"/>
    <property type="project" value="UniProtKB-UniRule"/>
</dbReference>
<dbReference type="GO" id="GO:0009295">
    <property type="term" value="C:nucleoid"/>
    <property type="evidence" value="ECO:0007669"/>
    <property type="project" value="UniProtKB-SubCell"/>
</dbReference>
<dbReference type="GO" id="GO:0003700">
    <property type="term" value="F:DNA-binding transcription factor activity"/>
    <property type="evidence" value="ECO:0000318"/>
    <property type="project" value="GO_Central"/>
</dbReference>
<dbReference type="GO" id="GO:0000976">
    <property type="term" value="F:transcription cis-regulatory region binding"/>
    <property type="evidence" value="ECO:0000318"/>
    <property type="project" value="GO_Central"/>
</dbReference>
<dbReference type="GO" id="GO:2000143">
    <property type="term" value="P:negative regulation of DNA-templated transcription initiation"/>
    <property type="evidence" value="ECO:0000318"/>
    <property type="project" value="GO_Central"/>
</dbReference>
<dbReference type="CDD" id="cd16321">
    <property type="entry name" value="MraZ_C"/>
    <property type="match status" value="1"/>
</dbReference>
<dbReference type="CDD" id="cd16320">
    <property type="entry name" value="MraZ_N"/>
    <property type="match status" value="1"/>
</dbReference>
<dbReference type="FunFam" id="3.40.1550.20:FF:000001">
    <property type="entry name" value="Transcriptional regulator MraZ"/>
    <property type="match status" value="1"/>
</dbReference>
<dbReference type="Gene3D" id="3.40.1550.20">
    <property type="entry name" value="Transcriptional regulator MraZ domain"/>
    <property type="match status" value="1"/>
</dbReference>
<dbReference type="HAMAP" id="MF_01008">
    <property type="entry name" value="MraZ"/>
    <property type="match status" value="1"/>
</dbReference>
<dbReference type="InterPro" id="IPR003444">
    <property type="entry name" value="MraZ"/>
</dbReference>
<dbReference type="InterPro" id="IPR035644">
    <property type="entry name" value="MraZ_C"/>
</dbReference>
<dbReference type="InterPro" id="IPR020603">
    <property type="entry name" value="MraZ_dom"/>
</dbReference>
<dbReference type="InterPro" id="IPR035642">
    <property type="entry name" value="MraZ_N"/>
</dbReference>
<dbReference type="InterPro" id="IPR038619">
    <property type="entry name" value="MraZ_sf"/>
</dbReference>
<dbReference type="InterPro" id="IPR007159">
    <property type="entry name" value="SpoVT-AbrB_dom"/>
</dbReference>
<dbReference type="InterPro" id="IPR037914">
    <property type="entry name" value="SpoVT-AbrB_sf"/>
</dbReference>
<dbReference type="NCBIfam" id="TIGR00242">
    <property type="entry name" value="division/cell wall cluster transcriptional repressor MraZ"/>
    <property type="match status" value="1"/>
</dbReference>
<dbReference type="PANTHER" id="PTHR34701">
    <property type="entry name" value="TRANSCRIPTIONAL REGULATOR MRAZ"/>
    <property type="match status" value="1"/>
</dbReference>
<dbReference type="PANTHER" id="PTHR34701:SF1">
    <property type="entry name" value="TRANSCRIPTIONAL REGULATOR MRAZ"/>
    <property type="match status" value="1"/>
</dbReference>
<dbReference type="Pfam" id="PF02381">
    <property type="entry name" value="MraZ"/>
    <property type="match status" value="2"/>
</dbReference>
<dbReference type="SUPFAM" id="SSF89447">
    <property type="entry name" value="AbrB/MazE/MraZ-like"/>
    <property type="match status" value="1"/>
</dbReference>
<dbReference type="PROSITE" id="PS51740">
    <property type="entry name" value="SPOVT_ABRB"/>
    <property type="match status" value="2"/>
</dbReference>
<gene>
    <name evidence="1" type="primary">mraZ</name>
    <name type="ordered locus">PA4421</name>
</gene>
<feature type="chain" id="PRO_0000108521" description="Transcriptional regulator MraZ">
    <location>
        <begin position="1"/>
        <end position="151"/>
    </location>
</feature>
<feature type="domain" description="SpoVT-AbrB 1" evidence="2">
    <location>
        <begin position="5"/>
        <end position="52"/>
    </location>
</feature>
<feature type="domain" description="SpoVT-AbrB 2" evidence="2">
    <location>
        <begin position="81"/>
        <end position="124"/>
    </location>
</feature>
<protein>
    <recommendedName>
        <fullName>Transcriptional regulator MraZ</fullName>
    </recommendedName>
</protein>
<evidence type="ECO:0000255" key="1">
    <source>
        <dbReference type="HAMAP-Rule" id="MF_01008"/>
    </source>
</evidence>
<evidence type="ECO:0000255" key="2">
    <source>
        <dbReference type="PROSITE-ProRule" id="PRU01076"/>
    </source>
</evidence>
<comment type="subunit">
    <text evidence="1">Forms oligomers.</text>
</comment>
<comment type="subcellular location">
    <subcellularLocation>
        <location evidence="1">Cytoplasm</location>
        <location evidence="1">Nucleoid</location>
    </subcellularLocation>
</comment>
<comment type="similarity">
    <text evidence="1">Belongs to the MraZ family.</text>
</comment>
<sequence length="151" mass="17111">MFRGANAISLDAKGRLAMPSRYRDELVSRCAGQLIVTIDAVDPCLTVYPLPEWELIEAKLRELPSLREETRRLQRLLIGNAVDLELDGNGRFLIPPRLREYAKLDKRAMLVGQLNKFQLWDEDAWNAMAEADLAAIKQPGGLPDELRDLIL</sequence>
<organism>
    <name type="scientific">Pseudomonas aeruginosa (strain ATCC 15692 / DSM 22644 / CIP 104116 / JCM 14847 / LMG 12228 / 1C / PRS 101 / PAO1)</name>
    <dbReference type="NCBI Taxonomy" id="208964"/>
    <lineage>
        <taxon>Bacteria</taxon>
        <taxon>Pseudomonadati</taxon>
        <taxon>Pseudomonadota</taxon>
        <taxon>Gammaproteobacteria</taxon>
        <taxon>Pseudomonadales</taxon>
        <taxon>Pseudomonadaceae</taxon>
        <taxon>Pseudomonas</taxon>
    </lineage>
</organism>
<reference key="1">
    <citation type="journal article" date="2000" name="Nature">
        <title>Complete genome sequence of Pseudomonas aeruginosa PAO1, an opportunistic pathogen.</title>
        <authorList>
            <person name="Stover C.K."/>
            <person name="Pham X.-Q.T."/>
            <person name="Erwin A.L."/>
            <person name="Mizoguchi S.D."/>
            <person name="Warrener P."/>
            <person name="Hickey M.J."/>
            <person name="Brinkman F.S.L."/>
            <person name="Hufnagle W.O."/>
            <person name="Kowalik D.J."/>
            <person name="Lagrou M."/>
            <person name="Garber R.L."/>
            <person name="Goltry L."/>
            <person name="Tolentino E."/>
            <person name="Westbrock-Wadman S."/>
            <person name="Yuan Y."/>
            <person name="Brody L.L."/>
            <person name="Coulter S.N."/>
            <person name="Folger K.R."/>
            <person name="Kas A."/>
            <person name="Larbig K."/>
            <person name="Lim R.M."/>
            <person name="Smith K.A."/>
            <person name="Spencer D.H."/>
            <person name="Wong G.K.-S."/>
            <person name="Wu Z."/>
            <person name="Paulsen I.T."/>
            <person name="Reizer J."/>
            <person name="Saier M.H. Jr."/>
            <person name="Hancock R.E.W."/>
            <person name="Lory S."/>
            <person name="Olson M.V."/>
        </authorList>
    </citation>
    <scope>NUCLEOTIDE SEQUENCE [LARGE SCALE GENOMIC DNA]</scope>
    <source>
        <strain>ATCC 15692 / DSM 22644 / CIP 104116 / JCM 14847 / LMG 12228 / 1C / PRS 101 / PAO1</strain>
    </source>
</reference>
<keyword id="KW-0963">Cytoplasm</keyword>
<keyword id="KW-0238">DNA-binding</keyword>
<keyword id="KW-1185">Reference proteome</keyword>
<keyword id="KW-0677">Repeat</keyword>
<keyword id="KW-0804">Transcription</keyword>
<keyword id="KW-0805">Transcription regulation</keyword>
<name>MRAZ_PSEAE</name>
<proteinExistence type="inferred from homology"/>
<accession>Q9HVZ4</accession>